<keyword id="KW-1185">Reference proteome</keyword>
<feature type="chain" id="PRO_0000209299" description="UPF0250 protein HD_2015">
    <location>
        <begin position="1"/>
        <end position="97"/>
    </location>
</feature>
<gene>
    <name type="ordered locus">HD_2015</name>
</gene>
<name>Y2015_HAEDU</name>
<organism>
    <name type="scientific">Haemophilus ducreyi (strain 35000HP / ATCC 700724)</name>
    <dbReference type="NCBI Taxonomy" id="233412"/>
    <lineage>
        <taxon>Bacteria</taxon>
        <taxon>Pseudomonadati</taxon>
        <taxon>Pseudomonadota</taxon>
        <taxon>Gammaproteobacteria</taxon>
        <taxon>Pasteurellales</taxon>
        <taxon>Pasteurellaceae</taxon>
        <taxon>Haemophilus</taxon>
    </lineage>
</organism>
<protein>
    <recommendedName>
        <fullName evidence="1">UPF0250 protein HD_2015</fullName>
    </recommendedName>
</protein>
<accession>Q7VKA8</accession>
<comment type="similarity">
    <text evidence="1">Belongs to the UPF0250 family.</text>
</comment>
<reference key="1">
    <citation type="submission" date="2003-06" db="EMBL/GenBank/DDBJ databases">
        <title>The complete genome sequence of Haemophilus ducreyi.</title>
        <authorList>
            <person name="Munson R.S. Jr."/>
            <person name="Ray W.C."/>
            <person name="Mahairas G."/>
            <person name="Sabo P."/>
            <person name="Mungur R."/>
            <person name="Johnson L."/>
            <person name="Nguyen D."/>
            <person name="Wang J."/>
            <person name="Forst C."/>
            <person name="Hood L."/>
        </authorList>
    </citation>
    <scope>NUCLEOTIDE SEQUENCE [LARGE SCALE GENOMIC DNA]</scope>
    <source>
        <strain>35000HP / ATCC 700724</strain>
    </source>
</reference>
<proteinExistence type="inferred from homology"/>
<dbReference type="EMBL" id="AE017143">
    <property type="protein sequence ID" value="AAP96724.1"/>
    <property type="molecule type" value="Genomic_DNA"/>
</dbReference>
<dbReference type="RefSeq" id="WP_010945745.1">
    <property type="nucleotide sequence ID" value="NC_002940.2"/>
</dbReference>
<dbReference type="SMR" id="Q7VKA8"/>
<dbReference type="STRING" id="233412.HD_2015"/>
<dbReference type="GeneID" id="60733518"/>
<dbReference type="KEGG" id="hdu:HD_2015"/>
<dbReference type="eggNOG" id="COG2921">
    <property type="taxonomic scope" value="Bacteria"/>
</dbReference>
<dbReference type="HOGENOM" id="CLU_161438_2_1_6"/>
<dbReference type="OrthoDB" id="9793424at2"/>
<dbReference type="Proteomes" id="UP000001022">
    <property type="component" value="Chromosome"/>
</dbReference>
<dbReference type="GO" id="GO:0005829">
    <property type="term" value="C:cytosol"/>
    <property type="evidence" value="ECO:0007669"/>
    <property type="project" value="TreeGrafter"/>
</dbReference>
<dbReference type="Gene3D" id="3.30.70.260">
    <property type="match status" value="1"/>
</dbReference>
<dbReference type="HAMAP" id="MF_00659">
    <property type="entry name" value="UPF0250"/>
    <property type="match status" value="1"/>
</dbReference>
<dbReference type="InterPro" id="IPR007454">
    <property type="entry name" value="UPF0250_YbeD-like"/>
</dbReference>
<dbReference type="InterPro" id="IPR027471">
    <property type="entry name" value="YbeD-like_sf"/>
</dbReference>
<dbReference type="NCBIfam" id="NF003447">
    <property type="entry name" value="PRK04998.1"/>
    <property type="match status" value="1"/>
</dbReference>
<dbReference type="PANTHER" id="PTHR38036">
    <property type="entry name" value="UPF0250 PROTEIN YBED"/>
    <property type="match status" value="1"/>
</dbReference>
<dbReference type="PANTHER" id="PTHR38036:SF1">
    <property type="entry name" value="UPF0250 PROTEIN YBED"/>
    <property type="match status" value="1"/>
</dbReference>
<dbReference type="Pfam" id="PF04359">
    <property type="entry name" value="DUF493"/>
    <property type="match status" value="1"/>
</dbReference>
<dbReference type="SUPFAM" id="SSF117991">
    <property type="entry name" value="YbeD/HP0495-like"/>
    <property type="match status" value="1"/>
</dbReference>
<sequence>MPQAINLKDLPQAKLKDLLEFPCAFTFKVVGIHREDLVEDVVAITQVHAKGDCNPRQQRSSKGTYNSVSIDIIAEHIDQIETLYLELAKITGVRMVL</sequence>
<evidence type="ECO:0000255" key="1">
    <source>
        <dbReference type="HAMAP-Rule" id="MF_00659"/>
    </source>
</evidence>